<comment type="function">
    <text evidence="1">Cell wall formation.</text>
</comment>
<comment type="catalytic activity">
    <reaction evidence="1">
        <text>UDP-N-acetyl-alpha-D-muramate + L-alanine + ATP = UDP-N-acetyl-alpha-D-muramoyl-L-alanine + ADP + phosphate + H(+)</text>
        <dbReference type="Rhea" id="RHEA:23372"/>
        <dbReference type="ChEBI" id="CHEBI:15378"/>
        <dbReference type="ChEBI" id="CHEBI:30616"/>
        <dbReference type="ChEBI" id="CHEBI:43474"/>
        <dbReference type="ChEBI" id="CHEBI:57972"/>
        <dbReference type="ChEBI" id="CHEBI:70757"/>
        <dbReference type="ChEBI" id="CHEBI:83898"/>
        <dbReference type="ChEBI" id="CHEBI:456216"/>
        <dbReference type="EC" id="6.3.2.8"/>
    </reaction>
</comment>
<comment type="pathway">
    <text evidence="1">Cell wall biogenesis; peptidoglycan biosynthesis.</text>
</comment>
<comment type="subcellular location">
    <subcellularLocation>
        <location evidence="1">Cytoplasm</location>
    </subcellularLocation>
</comment>
<comment type="similarity">
    <text evidence="1">Belongs to the MurCDEF family.</text>
</comment>
<accession>A3MY91</accession>
<keyword id="KW-0067">ATP-binding</keyword>
<keyword id="KW-0131">Cell cycle</keyword>
<keyword id="KW-0132">Cell division</keyword>
<keyword id="KW-0133">Cell shape</keyword>
<keyword id="KW-0961">Cell wall biogenesis/degradation</keyword>
<keyword id="KW-0963">Cytoplasm</keyword>
<keyword id="KW-0436">Ligase</keyword>
<keyword id="KW-0547">Nucleotide-binding</keyword>
<keyword id="KW-0573">Peptidoglycan synthesis</keyword>
<keyword id="KW-1185">Reference proteome</keyword>
<organism>
    <name type="scientific">Actinobacillus pleuropneumoniae serotype 5b (strain L20)</name>
    <dbReference type="NCBI Taxonomy" id="416269"/>
    <lineage>
        <taxon>Bacteria</taxon>
        <taxon>Pseudomonadati</taxon>
        <taxon>Pseudomonadota</taxon>
        <taxon>Gammaproteobacteria</taxon>
        <taxon>Pasteurellales</taxon>
        <taxon>Pasteurellaceae</taxon>
        <taxon>Actinobacillus</taxon>
    </lineage>
</organism>
<proteinExistence type="inferred from homology"/>
<sequence>MKNFQDKIKKLVPEMRRVNQIHFIGIGGAGMSGIAEVLLNEGYQISGSDIAEGPVTKRLAEAGAKVFIGHQAENVAGASVVVASSAIDDSNPEVRAAKEARIPVIQRAQMLAEIMRFRHGIAVAGTHGKTTTTAMISMIYTEAKLDPTFVNGGLVKSAGKNAHLGASRYLIAEADESDASFLHLQPMVSVVTNIEPDHMDTYGGDFEQMKATYVKFLRNLPFYGLAVMCADDETVIEIAPQVGRQVLTYGFSEKADYRIEDYQQTGFQGHYTVVCPNGERIDVLLNVPGKHNALNATAALAVAKEEGIANEAILAALADFQGAGRRFDQLGSFIRPNGKVMLVDDYGHHPTEVDVTIKAARSGWENKRVVMIFQPHRYSRTRDLFDDFVQVLSQVDALIMLEVYAAGEAPIVGADSKALCRSIRNLGKVDPILVSDTDQLGEVLDQIIQDGDLILAQGAGSVSRISRGLAESWKA</sequence>
<reference key="1">
    <citation type="journal article" date="2008" name="J. Bacteriol.">
        <title>The complete genome sequence of Actinobacillus pleuropneumoniae L20 (serotype 5b).</title>
        <authorList>
            <person name="Foote S.J."/>
            <person name="Bosse J.T."/>
            <person name="Bouevitch A.B."/>
            <person name="Langford P.R."/>
            <person name="Young N.M."/>
            <person name="Nash J.H.E."/>
        </authorList>
    </citation>
    <scope>NUCLEOTIDE SEQUENCE [LARGE SCALE GENOMIC DNA]</scope>
    <source>
        <strain>L20</strain>
    </source>
</reference>
<name>MURC_ACTP2</name>
<dbReference type="EC" id="6.3.2.8" evidence="1"/>
<dbReference type="EMBL" id="CP000569">
    <property type="protein sequence ID" value="ABN73127.1"/>
    <property type="molecule type" value="Genomic_DNA"/>
</dbReference>
<dbReference type="RefSeq" id="WP_005595615.1">
    <property type="nucleotide sequence ID" value="NC_009053.1"/>
</dbReference>
<dbReference type="SMR" id="A3MY91"/>
<dbReference type="STRING" id="416269.APL_0019"/>
<dbReference type="EnsemblBacteria" id="ABN73127">
    <property type="protein sequence ID" value="ABN73127"/>
    <property type="gene ID" value="APL_0019"/>
</dbReference>
<dbReference type="GeneID" id="48598160"/>
<dbReference type="KEGG" id="apl:APL_0019"/>
<dbReference type="eggNOG" id="COG0773">
    <property type="taxonomic scope" value="Bacteria"/>
</dbReference>
<dbReference type="HOGENOM" id="CLU_028104_2_2_6"/>
<dbReference type="UniPathway" id="UPA00219"/>
<dbReference type="Proteomes" id="UP000001432">
    <property type="component" value="Chromosome"/>
</dbReference>
<dbReference type="GO" id="GO:0005737">
    <property type="term" value="C:cytoplasm"/>
    <property type="evidence" value="ECO:0007669"/>
    <property type="project" value="UniProtKB-SubCell"/>
</dbReference>
<dbReference type="GO" id="GO:0005524">
    <property type="term" value="F:ATP binding"/>
    <property type="evidence" value="ECO:0007669"/>
    <property type="project" value="UniProtKB-UniRule"/>
</dbReference>
<dbReference type="GO" id="GO:0008763">
    <property type="term" value="F:UDP-N-acetylmuramate-L-alanine ligase activity"/>
    <property type="evidence" value="ECO:0007669"/>
    <property type="project" value="UniProtKB-UniRule"/>
</dbReference>
<dbReference type="GO" id="GO:0051301">
    <property type="term" value="P:cell division"/>
    <property type="evidence" value="ECO:0007669"/>
    <property type="project" value="UniProtKB-KW"/>
</dbReference>
<dbReference type="GO" id="GO:0071555">
    <property type="term" value="P:cell wall organization"/>
    <property type="evidence" value="ECO:0007669"/>
    <property type="project" value="UniProtKB-KW"/>
</dbReference>
<dbReference type="GO" id="GO:0009252">
    <property type="term" value="P:peptidoglycan biosynthetic process"/>
    <property type="evidence" value="ECO:0007669"/>
    <property type="project" value="UniProtKB-UniRule"/>
</dbReference>
<dbReference type="GO" id="GO:0008360">
    <property type="term" value="P:regulation of cell shape"/>
    <property type="evidence" value="ECO:0007669"/>
    <property type="project" value="UniProtKB-KW"/>
</dbReference>
<dbReference type="FunFam" id="3.40.1190.10:FF:000001">
    <property type="entry name" value="UDP-N-acetylmuramate--L-alanine ligase"/>
    <property type="match status" value="1"/>
</dbReference>
<dbReference type="FunFam" id="3.40.50.720:FF:000046">
    <property type="entry name" value="UDP-N-acetylmuramate--L-alanine ligase"/>
    <property type="match status" value="1"/>
</dbReference>
<dbReference type="Gene3D" id="3.90.190.20">
    <property type="entry name" value="Mur ligase, C-terminal domain"/>
    <property type="match status" value="1"/>
</dbReference>
<dbReference type="Gene3D" id="3.40.1190.10">
    <property type="entry name" value="Mur-like, catalytic domain"/>
    <property type="match status" value="1"/>
</dbReference>
<dbReference type="Gene3D" id="3.40.50.720">
    <property type="entry name" value="NAD(P)-binding Rossmann-like Domain"/>
    <property type="match status" value="1"/>
</dbReference>
<dbReference type="HAMAP" id="MF_00046">
    <property type="entry name" value="MurC"/>
    <property type="match status" value="1"/>
</dbReference>
<dbReference type="InterPro" id="IPR036565">
    <property type="entry name" value="Mur-like_cat_sf"/>
</dbReference>
<dbReference type="InterPro" id="IPR004101">
    <property type="entry name" value="Mur_ligase_C"/>
</dbReference>
<dbReference type="InterPro" id="IPR036615">
    <property type="entry name" value="Mur_ligase_C_dom_sf"/>
</dbReference>
<dbReference type="InterPro" id="IPR013221">
    <property type="entry name" value="Mur_ligase_cen"/>
</dbReference>
<dbReference type="InterPro" id="IPR000713">
    <property type="entry name" value="Mur_ligase_N"/>
</dbReference>
<dbReference type="InterPro" id="IPR050061">
    <property type="entry name" value="MurCDEF_pg_biosynth"/>
</dbReference>
<dbReference type="InterPro" id="IPR005758">
    <property type="entry name" value="UDP-N-AcMur_Ala_ligase_MurC"/>
</dbReference>
<dbReference type="NCBIfam" id="TIGR01082">
    <property type="entry name" value="murC"/>
    <property type="match status" value="1"/>
</dbReference>
<dbReference type="PANTHER" id="PTHR43445:SF3">
    <property type="entry name" value="UDP-N-ACETYLMURAMATE--L-ALANINE LIGASE"/>
    <property type="match status" value="1"/>
</dbReference>
<dbReference type="PANTHER" id="PTHR43445">
    <property type="entry name" value="UDP-N-ACETYLMURAMATE--L-ALANINE LIGASE-RELATED"/>
    <property type="match status" value="1"/>
</dbReference>
<dbReference type="Pfam" id="PF01225">
    <property type="entry name" value="Mur_ligase"/>
    <property type="match status" value="1"/>
</dbReference>
<dbReference type="Pfam" id="PF02875">
    <property type="entry name" value="Mur_ligase_C"/>
    <property type="match status" value="1"/>
</dbReference>
<dbReference type="Pfam" id="PF08245">
    <property type="entry name" value="Mur_ligase_M"/>
    <property type="match status" value="1"/>
</dbReference>
<dbReference type="SUPFAM" id="SSF51984">
    <property type="entry name" value="MurCD N-terminal domain"/>
    <property type="match status" value="1"/>
</dbReference>
<dbReference type="SUPFAM" id="SSF53623">
    <property type="entry name" value="MurD-like peptide ligases, catalytic domain"/>
    <property type="match status" value="1"/>
</dbReference>
<dbReference type="SUPFAM" id="SSF53244">
    <property type="entry name" value="MurD-like peptide ligases, peptide-binding domain"/>
    <property type="match status" value="1"/>
</dbReference>
<protein>
    <recommendedName>
        <fullName evidence="1">UDP-N-acetylmuramate--L-alanine ligase</fullName>
        <ecNumber evidence="1">6.3.2.8</ecNumber>
    </recommendedName>
    <alternativeName>
        <fullName evidence="1">UDP-N-acetylmuramoyl-L-alanine synthetase</fullName>
    </alternativeName>
</protein>
<feature type="chain" id="PRO_1000004305" description="UDP-N-acetylmuramate--L-alanine ligase">
    <location>
        <begin position="1"/>
        <end position="475"/>
    </location>
</feature>
<feature type="binding site" evidence="1">
    <location>
        <begin position="125"/>
        <end position="131"/>
    </location>
    <ligand>
        <name>ATP</name>
        <dbReference type="ChEBI" id="CHEBI:30616"/>
    </ligand>
</feature>
<evidence type="ECO:0000255" key="1">
    <source>
        <dbReference type="HAMAP-Rule" id="MF_00046"/>
    </source>
</evidence>
<gene>
    <name evidence="1" type="primary">murC</name>
    <name type="ordered locus">APL_0019</name>
</gene>